<sequence>MQLIPAIDLKDGRCVRLRQGRMDDETVFSDDPVAMAGRWVAAGTRRLHLVDLNGAVAGKPVNAEIIHRIATRYPDLRIQVGGGIRDLDTIRGYREAGVDDLIIGTQAVRRPEFVTEACQAFPGHIIVGLDARDGRVATDGWEQVSEVRAVDLARRFEAAGVNAIVFTDIGRDGMMKGVNIEATRELARAITIPVIASGGVSSLEDVRALCAAAGDGISGAIVGRALYEGSLDLAEAQGLADELCGVKP</sequence>
<feature type="chain" id="PRO_0000290445" description="1-(5-phosphoribosyl)-5-[(5-phosphoribosylamino)methylideneamino] imidazole-4-carboxamide isomerase">
    <location>
        <begin position="1"/>
        <end position="248"/>
    </location>
</feature>
<feature type="active site" description="Proton acceptor" evidence="1">
    <location>
        <position position="8"/>
    </location>
</feature>
<feature type="active site" description="Proton donor" evidence="1">
    <location>
        <position position="130"/>
    </location>
</feature>
<organism>
    <name type="scientific">Alkalilimnicola ehrlichii (strain ATCC BAA-1101 / DSM 17681 / MLHE-1)</name>
    <dbReference type="NCBI Taxonomy" id="187272"/>
    <lineage>
        <taxon>Bacteria</taxon>
        <taxon>Pseudomonadati</taxon>
        <taxon>Pseudomonadota</taxon>
        <taxon>Gammaproteobacteria</taxon>
        <taxon>Chromatiales</taxon>
        <taxon>Ectothiorhodospiraceae</taxon>
        <taxon>Alkalilimnicola</taxon>
    </lineage>
</organism>
<evidence type="ECO:0000255" key="1">
    <source>
        <dbReference type="HAMAP-Rule" id="MF_01014"/>
    </source>
</evidence>
<evidence type="ECO:0000305" key="2"/>
<comment type="catalytic activity">
    <reaction evidence="1">
        <text>1-(5-phospho-beta-D-ribosyl)-5-[(5-phospho-beta-D-ribosylamino)methylideneamino]imidazole-4-carboxamide = 5-[(5-phospho-1-deoxy-D-ribulos-1-ylimino)methylamino]-1-(5-phospho-beta-D-ribosyl)imidazole-4-carboxamide</text>
        <dbReference type="Rhea" id="RHEA:15469"/>
        <dbReference type="ChEBI" id="CHEBI:58435"/>
        <dbReference type="ChEBI" id="CHEBI:58525"/>
        <dbReference type="EC" id="5.3.1.16"/>
    </reaction>
</comment>
<comment type="pathway">
    <text evidence="1">Amino-acid biosynthesis; L-histidine biosynthesis; L-histidine from 5-phospho-alpha-D-ribose 1-diphosphate: step 4/9.</text>
</comment>
<comment type="subcellular location">
    <subcellularLocation>
        <location evidence="1">Cytoplasm</location>
    </subcellularLocation>
</comment>
<comment type="similarity">
    <text evidence="1">Belongs to the HisA/HisF family.</text>
</comment>
<comment type="sequence caution" evidence="2">
    <conflict type="erroneous initiation">
        <sequence resource="EMBL-CDS" id="ABI57955"/>
    </conflict>
</comment>
<accession>Q0A5D2</accession>
<protein>
    <recommendedName>
        <fullName evidence="1">1-(5-phosphoribosyl)-5-[(5-phosphoribosylamino)methylideneamino] imidazole-4-carboxamide isomerase</fullName>
        <ecNumber evidence="1">5.3.1.16</ecNumber>
    </recommendedName>
    <alternativeName>
        <fullName evidence="1">Phosphoribosylformimino-5-aminoimidazole carboxamide ribotide isomerase</fullName>
    </alternativeName>
</protein>
<name>HIS4_ALKEH</name>
<dbReference type="EC" id="5.3.1.16" evidence="1"/>
<dbReference type="EMBL" id="CP000453">
    <property type="protein sequence ID" value="ABI57955.1"/>
    <property type="status" value="ALT_INIT"/>
    <property type="molecule type" value="Genomic_DNA"/>
</dbReference>
<dbReference type="RefSeq" id="WP_041718685.1">
    <property type="nucleotide sequence ID" value="NC_008340.1"/>
</dbReference>
<dbReference type="SMR" id="Q0A5D2"/>
<dbReference type="KEGG" id="aeh:Mlg_2615"/>
<dbReference type="eggNOG" id="COG0106">
    <property type="taxonomic scope" value="Bacteria"/>
</dbReference>
<dbReference type="HOGENOM" id="CLU_048577_1_1_6"/>
<dbReference type="OrthoDB" id="9807749at2"/>
<dbReference type="UniPathway" id="UPA00031">
    <property type="reaction ID" value="UER00009"/>
</dbReference>
<dbReference type="Proteomes" id="UP000001962">
    <property type="component" value="Chromosome"/>
</dbReference>
<dbReference type="GO" id="GO:0005737">
    <property type="term" value="C:cytoplasm"/>
    <property type="evidence" value="ECO:0007669"/>
    <property type="project" value="UniProtKB-SubCell"/>
</dbReference>
<dbReference type="GO" id="GO:0003949">
    <property type="term" value="F:1-(5-phosphoribosyl)-5-[(5-phosphoribosylamino)methylideneamino]imidazole-4-carboxamide isomerase activity"/>
    <property type="evidence" value="ECO:0007669"/>
    <property type="project" value="UniProtKB-UniRule"/>
</dbReference>
<dbReference type="GO" id="GO:0000105">
    <property type="term" value="P:L-histidine biosynthetic process"/>
    <property type="evidence" value="ECO:0007669"/>
    <property type="project" value="UniProtKB-UniRule"/>
</dbReference>
<dbReference type="GO" id="GO:0000162">
    <property type="term" value="P:L-tryptophan biosynthetic process"/>
    <property type="evidence" value="ECO:0007669"/>
    <property type="project" value="TreeGrafter"/>
</dbReference>
<dbReference type="CDD" id="cd04732">
    <property type="entry name" value="HisA"/>
    <property type="match status" value="1"/>
</dbReference>
<dbReference type="FunFam" id="3.20.20.70:FF:000009">
    <property type="entry name" value="1-(5-phosphoribosyl)-5-[(5-phosphoribosylamino)methylideneamino] imidazole-4-carboxamide isomerase"/>
    <property type="match status" value="1"/>
</dbReference>
<dbReference type="Gene3D" id="3.20.20.70">
    <property type="entry name" value="Aldolase class I"/>
    <property type="match status" value="1"/>
</dbReference>
<dbReference type="HAMAP" id="MF_01014">
    <property type="entry name" value="HisA"/>
    <property type="match status" value="1"/>
</dbReference>
<dbReference type="InterPro" id="IPR013785">
    <property type="entry name" value="Aldolase_TIM"/>
</dbReference>
<dbReference type="InterPro" id="IPR006062">
    <property type="entry name" value="His_biosynth"/>
</dbReference>
<dbReference type="InterPro" id="IPR006063">
    <property type="entry name" value="HisA_bact_arch"/>
</dbReference>
<dbReference type="InterPro" id="IPR044524">
    <property type="entry name" value="Isoase_HisA-like"/>
</dbReference>
<dbReference type="InterPro" id="IPR023016">
    <property type="entry name" value="Isoase_HisA-like_bact"/>
</dbReference>
<dbReference type="InterPro" id="IPR011060">
    <property type="entry name" value="RibuloseP-bd_barrel"/>
</dbReference>
<dbReference type="NCBIfam" id="TIGR00007">
    <property type="entry name" value="1-(5-phosphoribosyl)-5-[(5-phosphoribosylamino)methylideneamino]imidazole-4-carboxamide isomerase"/>
    <property type="match status" value="1"/>
</dbReference>
<dbReference type="NCBIfam" id="NF010112">
    <property type="entry name" value="PRK13585.1"/>
    <property type="match status" value="1"/>
</dbReference>
<dbReference type="PANTHER" id="PTHR43090">
    <property type="entry name" value="1-(5-PHOSPHORIBOSYL)-5-[(5-PHOSPHORIBOSYLAMINO)METHYLIDENEAMINO] IMIDAZOLE-4-CARBOXAMIDE ISOMERASE"/>
    <property type="match status" value="1"/>
</dbReference>
<dbReference type="PANTHER" id="PTHR43090:SF2">
    <property type="entry name" value="1-(5-PHOSPHORIBOSYL)-5-[(5-PHOSPHORIBOSYLAMINO)METHYLIDENEAMINO] IMIDAZOLE-4-CARBOXAMIDE ISOMERASE"/>
    <property type="match status" value="1"/>
</dbReference>
<dbReference type="Pfam" id="PF00977">
    <property type="entry name" value="His_biosynth"/>
    <property type="match status" value="1"/>
</dbReference>
<dbReference type="SUPFAM" id="SSF51366">
    <property type="entry name" value="Ribulose-phoshate binding barrel"/>
    <property type="match status" value="1"/>
</dbReference>
<gene>
    <name evidence="1" type="primary">hisA</name>
    <name type="ordered locus">Mlg_2615</name>
</gene>
<keyword id="KW-0028">Amino-acid biosynthesis</keyword>
<keyword id="KW-0963">Cytoplasm</keyword>
<keyword id="KW-0368">Histidine biosynthesis</keyword>
<keyword id="KW-0413">Isomerase</keyword>
<keyword id="KW-1185">Reference proteome</keyword>
<reference key="1">
    <citation type="submission" date="2006-08" db="EMBL/GenBank/DDBJ databases">
        <title>Complete sequence of Alkalilimnicola ehrilichei MLHE-1.</title>
        <authorList>
            <person name="Copeland A."/>
            <person name="Lucas S."/>
            <person name="Lapidus A."/>
            <person name="Barry K."/>
            <person name="Detter J.C."/>
            <person name="Glavina del Rio T."/>
            <person name="Hammon N."/>
            <person name="Israni S."/>
            <person name="Dalin E."/>
            <person name="Tice H."/>
            <person name="Pitluck S."/>
            <person name="Sims D."/>
            <person name="Brettin T."/>
            <person name="Bruce D."/>
            <person name="Han C."/>
            <person name="Tapia R."/>
            <person name="Gilna P."/>
            <person name="Schmutz J."/>
            <person name="Larimer F."/>
            <person name="Land M."/>
            <person name="Hauser L."/>
            <person name="Kyrpides N."/>
            <person name="Mikhailova N."/>
            <person name="Oremland R.S."/>
            <person name="Hoeft S.E."/>
            <person name="Switzer-Blum J."/>
            <person name="Kulp T."/>
            <person name="King G."/>
            <person name="Tabita R."/>
            <person name="Witte B."/>
            <person name="Santini J.M."/>
            <person name="Basu P."/>
            <person name="Hollibaugh J.T."/>
            <person name="Xie G."/>
            <person name="Stolz J.F."/>
            <person name="Richardson P."/>
        </authorList>
    </citation>
    <scope>NUCLEOTIDE SEQUENCE [LARGE SCALE GENOMIC DNA]</scope>
    <source>
        <strain>ATCC BAA-1101 / DSM 17681 / MLHE-1</strain>
    </source>
</reference>
<proteinExistence type="inferred from homology"/>